<proteinExistence type="evidence at transcript level"/>
<sequence>MKEKKGHYVPPSYIPLTQSDADTEVETTTPNLEIAVSESTKDDPRQWSSGICACFDDMQSCCVGLFCPCYIFGKNAELLGSGTFAGPCLTHCISWALVNTICCFATNGALLGLPGCFVSCYACGYRKSLRAKYNLQEAPCGDFVTHFFCHLCAICQEYREIREQSSGSYPLDMKMAITNAPLAQTMESAN</sequence>
<keyword id="KW-0025">Alternative splicing</keyword>
<keyword id="KW-0472">Membrane</keyword>
<keyword id="KW-1185">Reference proteome</keyword>
<keyword id="KW-0812">Transmembrane</keyword>
<keyword id="KW-1133">Transmembrane helix</keyword>
<reference key="1">
    <citation type="journal article" date="1999" name="Nature">
        <title>Sequence and analysis of chromosome 2 of the plant Arabidopsis thaliana.</title>
        <authorList>
            <person name="Lin X."/>
            <person name="Kaul S."/>
            <person name="Rounsley S.D."/>
            <person name="Shea T.P."/>
            <person name="Benito M.-I."/>
            <person name="Town C.D."/>
            <person name="Fujii C.Y."/>
            <person name="Mason T.M."/>
            <person name="Bowman C.L."/>
            <person name="Barnstead M.E."/>
            <person name="Feldblyum T.V."/>
            <person name="Buell C.R."/>
            <person name="Ketchum K.A."/>
            <person name="Lee J.J."/>
            <person name="Ronning C.M."/>
            <person name="Koo H.L."/>
            <person name="Moffat K.S."/>
            <person name="Cronin L.A."/>
            <person name="Shen M."/>
            <person name="Pai G."/>
            <person name="Van Aken S."/>
            <person name="Umayam L."/>
            <person name="Tallon L.J."/>
            <person name="Gill J.E."/>
            <person name="Adams M.D."/>
            <person name="Carrera A.J."/>
            <person name="Creasy T.H."/>
            <person name="Goodman H.M."/>
            <person name="Somerville C.R."/>
            <person name="Copenhaver G.P."/>
            <person name="Preuss D."/>
            <person name="Nierman W.C."/>
            <person name="White O."/>
            <person name="Eisen J.A."/>
            <person name="Salzberg S.L."/>
            <person name="Fraser C.M."/>
            <person name="Venter J.C."/>
        </authorList>
    </citation>
    <scope>NUCLEOTIDE SEQUENCE [LARGE SCALE GENOMIC DNA]</scope>
    <source>
        <strain>cv. Columbia</strain>
    </source>
</reference>
<reference key="2">
    <citation type="journal article" date="2017" name="Plant J.">
        <title>Araport11: a complete reannotation of the Arabidopsis thaliana reference genome.</title>
        <authorList>
            <person name="Cheng C.Y."/>
            <person name="Krishnakumar V."/>
            <person name="Chan A.P."/>
            <person name="Thibaud-Nissen F."/>
            <person name="Schobel S."/>
            <person name="Town C.D."/>
        </authorList>
    </citation>
    <scope>GENOME REANNOTATION</scope>
    <source>
        <strain>cv. Columbia</strain>
    </source>
</reference>
<reference key="3">
    <citation type="submission" date="2002-03" db="EMBL/GenBank/DDBJ databases">
        <title>Full-length cDNA from Arabidopsis thaliana.</title>
        <authorList>
            <person name="Brover V.V."/>
            <person name="Troukhan M.E."/>
            <person name="Alexandrov N.A."/>
            <person name="Lu Y.-P."/>
            <person name="Flavell R.B."/>
            <person name="Feldmann K.A."/>
        </authorList>
    </citation>
    <scope>NUCLEOTIDE SEQUENCE [LARGE SCALE MRNA] (ISOFORM 1)</scope>
</reference>
<reference key="4">
    <citation type="submission" date="2006-07" db="EMBL/GenBank/DDBJ databases">
        <title>Large-scale analysis of RIKEN Arabidopsis full-length (RAFL) cDNAs.</title>
        <authorList>
            <person name="Totoki Y."/>
            <person name="Seki M."/>
            <person name="Ishida J."/>
            <person name="Nakajima M."/>
            <person name="Enju A."/>
            <person name="Kamiya A."/>
            <person name="Narusaka M."/>
            <person name="Shin-i T."/>
            <person name="Nakagawa M."/>
            <person name="Sakamoto N."/>
            <person name="Oishi K."/>
            <person name="Kohara Y."/>
            <person name="Kobayashi M."/>
            <person name="Toyoda A."/>
            <person name="Sakaki Y."/>
            <person name="Sakurai T."/>
            <person name="Iida K."/>
            <person name="Akiyama K."/>
            <person name="Satou M."/>
            <person name="Toyoda T."/>
            <person name="Konagaya A."/>
            <person name="Carninci P."/>
            <person name="Kawai J."/>
            <person name="Hayashizaki Y."/>
            <person name="Shinozaki K."/>
        </authorList>
    </citation>
    <scope>NUCLEOTIDE SEQUENCE [LARGE SCALE MRNA] (ISOFORM 3)</scope>
    <source>
        <strain>cv. Columbia</strain>
    </source>
</reference>
<reference key="5">
    <citation type="submission" date="2006-11" db="EMBL/GenBank/DDBJ databases">
        <title>Arabidopsis ORF Clones.</title>
        <authorList>
            <person name="Bautista V.R."/>
            <person name="Kim C.J."/>
            <person name="Chen H."/>
            <person name="Quinitio C."/>
            <person name="Ecker J.R."/>
        </authorList>
    </citation>
    <scope>NUCLEOTIDE SEQUENCE [LARGE SCALE MRNA] (ISOFORM 1)</scope>
    <source>
        <strain>cv. Columbia</strain>
    </source>
</reference>
<reference key="6">
    <citation type="journal article" date="2004" name="Plant Physiol.">
        <title>A novel family of cys-rich membrane proteins mediates cadmium resistance in Arabidopsis.</title>
        <authorList>
            <person name="Song W.Y."/>
            <person name="Martinoia E."/>
            <person name="Lee J."/>
            <person name="Kim D."/>
            <person name="Kim D.Y."/>
            <person name="Vogt E."/>
            <person name="Shim D."/>
            <person name="Choi K.S."/>
            <person name="Hwang I."/>
            <person name="Lee Y."/>
        </authorList>
    </citation>
    <scope>FUNCTION</scope>
    <scope>GENE FAMILY</scope>
    <scope>NOMENCLATURE</scope>
</reference>
<name>PCR10_ARATH</name>
<gene>
    <name type="primary">PCR10</name>
    <name type="ordered locus">At2g40935</name>
    <name type="ORF">T20B5</name>
</gene>
<dbReference type="EMBL" id="AC002409">
    <property type="protein sequence ID" value="AAM14839.1"/>
    <property type="molecule type" value="Genomic_DNA"/>
</dbReference>
<dbReference type="EMBL" id="CP002685">
    <property type="protein sequence ID" value="AEC09901.1"/>
    <property type="molecule type" value="Genomic_DNA"/>
</dbReference>
<dbReference type="EMBL" id="CP002685">
    <property type="protein sequence ID" value="AEC09902.1"/>
    <property type="molecule type" value="Genomic_DNA"/>
</dbReference>
<dbReference type="EMBL" id="CP002685">
    <property type="protein sequence ID" value="AEC09903.1"/>
    <property type="molecule type" value="Genomic_DNA"/>
</dbReference>
<dbReference type="EMBL" id="CP002685">
    <property type="protein sequence ID" value="ANM62344.1"/>
    <property type="molecule type" value="Genomic_DNA"/>
</dbReference>
<dbReference type="EMBL" id="CP002685">
    <property type="protein sequence ID" value="ANM62345.1"/>
    <property type="molecule type" value="Genomic_DNA"/>
</dbReference>
<dbReference type="EMBL" id="CP002685">
    <property type="protein sequence ID" value="ANM62346.1"/>
    <property type="molecule type" value="Genomic_DNA"/>
</dbReference>
<dbReference type="EMBL" id="CP002685">
    <property type="protein sequence ID" value="ANM62347.1"/>
    <property type="molecule type" value="Genomic_DNA"/>
</dbReference>
<dbReference type="EMBL" id="CP002685">
    <property type="protein sequence ID" value="ANM62348.1"/>
    <property type="molecule type" value="Genomic_DNA"/>
</dbReference>
<dbReference type="EMBL" id="CP002685">
    <property type="protein sequence ID" value="ANM62349.1"/>
    <property type="molecule type" value="Genomic_DNA"/>
</dbReference>
<dbReference type="EMBL" id="AY085101">
    <property type="protein sequence ID" value="AAM61655.1"/>
    <property type="molecule type" value="mRNA"/>
</dbReference>
<dbReference type="EMBL" id="AK228174">
    <property type="protein sequence ID" value="BAF00130.1"/>
    <property type="molecule type" value="mRNA"/>
</dbReference>
<dbReference type="EMBL" id="BT029441">
    <property type="protein sequence ID" value="ABK59670.1"/>
    <property type="molecule type" value="mRNA"/>
</dbReference>
<dbReference type="RefSeq" id="NP_001118490.1">
    <molecule id="Q8S8T8-2"/>
    <property type="nucleotide sequence ID" value="NM_001125018.1"/>
</dbReference>
<dbReference type="RefSeq" id="NP_001318397.1">
    <molecule id="Q8S8T8-1"/>
    <property type="nucleotide sequence ID" value="NM_001336877.1"/>
</dbReference>
<dbReference type="RefSeq" id="NP_001324506.1">
    <molecule id="Q8S8T8-3"/>
    <property type="nucleotide sequence ID" value="NM_001336881.1"/>
</dbReference>
<dbReference type="RefSeq" id="NP_001324507.1">
    <molecule id="Q8S8T8-1"/>
    <property type="nucleotide sequence ID" value="NM_001336882.1"/>
</dbReference>
<dbReference type="RefSeq" id="NP_001324508.1">
    <molecule id="Q8S8T8-1"/>
    <property type="nucleotide sequence ID" value="NM_001336880.1"/>
</dbReference>
<dbReference type="RefSeq" id="NP_001324509.1">
    <molecule id="Q8S8T8-3"/>
    <property type="nucleotide sequence ID" value="NM_001336878.1"/>
</dbReference>
<dbReference type="RefSeq" id="NP_001324510.1">
    <molecule id="Q8S8T8-1"/>
    <property type="nucleotide sequence ID" value="NM_001336879.1"/>
</dbReference>
<dbReference type="RefSeq" id="NP_565945.1">
    <molecule id="Q8S8T8-1"/>
    <property type="nucleotide sequence ID" value="NM_129657.3"/>
</dbReference>
<dbReference type="RefSeq" id="NP_850339.1">
    <molecule id="Q8S8T8-3"/>
    <property type="nucleotide sequence ID" value="NM_180008.2"/>
</dbReference>
<dbReference type="FunCoup" id="Q8S8T8">
    <property type="interactions" value="124"/>
</dbReference>
<dbReference type="STRING" id="3702.Q8S8T8"/>
<dbReference type="PaxDb" id="3702-AT2G40935.1"/>
<dbReference type="ProteomicsDB" id="236287">
    <molecule id="Q8S8T8-1"/>
</dbReference>
<dbReference type="EnsemblPlants" id="AT2G40935.1">
    <molecule id="Q8S8T8-1"/>
    <property type="protein sequence ID" value="AT2G40935.1"/>
    <property type="gene ID" value="AT2G40935"/>
</dbReference>
<dbReference type="EnsemblPlants" id="AT2G40935.2">
    <molecule id="Q8S8T8-3"/>
    <property type="protein sequence ID" value="AT2G40935.2"/>
    <property type="gene ID" value="AT2G40935"/>
</dbReference>
<dbReference type="EnsemblPlants" id="AT2G40935.3">
    <molecule id="Q8S8T8-2"/>
    <property type="protein sequence ID" value="AT2G40935.3"/>
    <property type="gene ID" value="AT2G40935"/>
</dbReference>
<dbReference type="EnsemblPlants" id="AT2G40935.4">
    <molecule id="Q8S8T8-3"/>
    <property type="protein sequence ID" value="AT2G40935.4"/>
    <property type="gene ID" value="AT2G40935"/>
</dbReference>
<dbReference type="EnsemblPlants" id="AT2G40935.5">
    <molecule id="Q8S8T8-1"/>
    <property type="protein sequence ID" value="AT2G40935.5"/>
    <property type="gene ID" value="AT2G40935"/>
</dbReference>
<dbReference type="EnsemblPlants" id="AT2G40935.6">
    <molecule id="Q8S8T8-1"/>
    <property type="protein sequence ID" value="AT2G40935.6"/>
    <property type="gene ID" value="AT2G40935"/>
</dbReference>
<dbReference type="EnsemblPlants" id="AT2G40935.7">
    <molecule id="Q8S8T8-3"/>
    <property type="protein sequence ID" value="AT2G40935.7"/>
    <property type="gene ID" value="AT2G40935"/>
</dbReference>
<dbReference type="EnsemblPlants" id="AT2G40935.8">
    <molecule id="Q8S8T8-1"/>
    <property type="protein sequence ID" value="AT2G40935.8"/>
    <property type="gene ID" value="AT2G40935"/>
</dbReference>
<dbReference type="EnsemblPlants" id="AT2G40935.9">
    <molecule id="Q8S8T8-1"/>
    <property type="protein sequence ID" value="AT2G40935.9"/>
    <property type="gene ID" value="AT2G40935"/>
</dbReference>
<dbReference type="GeneID" id="818692"/>
<dbReference type="Gramene" id="AT2G40935.1">
    <molecule id="Q8S8T8-1"/>
    <property type="protein sequence ID" value="AT2G40935.1"/>
    <property type="gene ID" value="AT2G40935"/>
</dbReference>
<dbReference type="Gramene" id="AT2G40935.2">
    <molecule id="Q8S8T8-3"/>
    <property type="protein sequence ID" value="AT2G40935.2"/>
    <property type="gene ID" value="AT2G40935"/>
</dbReference>
<dbReference type="Gramene" id="AT2G40935.3">
    <molecule id="Q8S8T8-2"/>
    <property type="protein sequence ID" value="AT2G40935.3"/>
    <property type="gene ID" value="AT2G40935"/>
</dbReference>
<dbReference type="Gramene" id="AT2G40935.4">
    <molecule id="Q8S8T8-3"/>
    <property type="protein sequence ID" value="AT2G40935.4"/>
    <property type="gene ID" value="AT2G40935"/>
</dbReference>
<dbReference type="Gramene" id="AT2G40935.5">
    <molecule id="Q8S8T8-1"/>
    <property type="protein sequence ID" value="AT2G40935.5"/>
    <property type="gene ID" value="AT2G40935"/>
</dbReference>
<dbReference type="Gramene" id="AT2G40935.6">
    <molecule id="Q8S8T8-1"/>
    <property type="protein sequence ID" value="AT2G40935.6"/>
    <property type="gene ID" value="AT2G40935"/>
</dbReference>
<dbReference type="Gramene" id="AT2G40935.7">
    <molecule id="Q8S8T8-3"/>
    <property type="protein sequence ID" value="AT2G40935.7"/>
    <property type="gene ID" value="AT2G40935"/>
</dbReference>
<dbReference type="Gramene" id="AT2G40935.8">
    <molecule id="Q8S8T8-1"/>
    <property type="protein sequence ID" value="AT2G40935.8"/>
    <property type="gene ID" value="AT2G40935"/>
</dbReference>
<dbReference type="Gramene" id="AT2G40935.9">
    <molecule id="Q8S8T8-1"/>
    <property type="protein sequence ID" value="AT2G40935.9"/>
    <property type="gene ID" value="AT2G40935"/>
</dbReference>
<dbReference type="KEGG" id="ath:AT2G40935"/>
<dbReference type="Araport" id="AT2G40935"/>
<dbReference type="TAIR" id="AT2G40935"/>
<dbReference type="eggNOG" id="ENOG502RV9Z">
    <property type="taxonomic scope" value="Eukaryota"/>
</dbReference>
<dbReference type="HOGENOM" id="CLU_083147_0_0_1"/>
<dbReference type="InParanoid" id="Q8S8T8"/>
<dbReference type="OMA" id="QEYREIC"/>
<dbReference type="OrthoDB" id="1045822at2759"/>
<dbReference type="PhylomeDB" id="Q8S8T8"/>
<dbReference type="PRO" id="PR:Q8S8T8"/>
<dbReference type="Proteomes" id="UP000006548">
    <property type="component" value="Chromosome 2"/>
</dbReference>
<dbReference type="ExpressionAtlas" id="Q8S8T8">
    <property type="expression patterns" value="baseline and differential"/>
</dbReference>
<dbReference type="GO" id="GO:0016020">
    <property type="term" value="C:membrane"/>
    <property type="evidence" value="ECO:0007669"/>
    <property type="project" value="UniProtKB-SubCell"/>
</dbReference>
<dbReference type="InterPro" id="IPR006461">
    <property type="entry name" value="PLAC_motif_containing"/>
</dbReference>
<dbReference type="NCBIfam" id="TIGR01571">
    <property type="entry name" value="A_thal_Cys_rich"/>
    <property type="match status" value="1"/>
</dbReference>
<dbReference type="PANTHER" id="PTHR15907">
    <property type="entry name" value="DUF614 FAMILY PROTEIN-RELATED"/>
    <property type="match status" value="1"/>
</dbReference>
<dbReference type="Pfam" id="PF04749">
    <property type="entry name" value="PLAC8"/>
    <property type="match status" value="1"/>
</dbReference>
<organism>
    <name type="scientific">Arabidopsis thaliana</name>
    <name type="common">Mouse-ear cress</name>
    <dbReference type="NCBI Taxonomy" id="3702"/>
    <lineage>
        <taxon>Eukaryota</taxon>
        <taxon>Viridiplantae</taxon>
        <taxon>Streptophyta</taxon>
        <taxon>Embryophyta</taxon>
        <taxon>Tracheophyta</taxon>
        <taxon>Spermatophyta</taxon>
        <taxon>Magnoliopsida</taxon>
        <taxon>eudicotyledons</taxon>
        <taxon>Gunneridae</taxon>
        <taxon>Pentapetalae</taxon>
        <taxon>rosids</taxon>
        <taxon>malvids</taxon>
        <taxon>Brassicales</taxon>
        <taxon>Brassicaceae</taxon>
        <taxon>Camelineae</taxon>
        <taxon>Arabidopsis</taxon>
    </lineage>
</organism>
<evidence type="ECO:0000255" key="1"/>
<evidence type="ECO:0000269" key="2">
    <source>
    </source>
</evidence>
<evidence type="ECO:0000303" key="3">
    <source ref="4"/>
</evidence>
<evidence type="ECO:0000305" key="4"/>
<feature type="chain" id="PRO_0000407726" description="Protein PLANT CADMIUM RESISTANCE 10">
    <location>
        <begin position="1"/>
        <end position="190"/>
    </location>
</feature>
<feature type="transmembrane region" description="Helical" evidence="1">
    <location>
        <begin position="78"/>
        <end position="98"/>
    </location>
</feature>
<feature type="transmembrane region" description="Helical" evidence="1">
    <location>
        <begin position="108"/>
        <end position="125"/>
    </location>
</feature>
<feature type="splice variant" id="VSP_040960" description="In isoform 3." evidence="3">
    <location>
        <begin position="1"/>
        <end position="24"/>
    </location>
</feature>
<feature type="splice variant" id="VSP_040961" description="In isoform 3." evidence="3">
    <original>VETTTPNLEIAVSESTKDDPRQWSSGICACFDDMQSC</original>
    <variation>MVIWYMRLLRRYAELYATTLCHPNLLHFTTRIKFVKG</variation>
    <location>
        <begin position="25"/>
        <end position="61"/>
    </location>
</feature>
<feature type="splice variant" id="VSP_040962" description="In isoform 2." evidence="4">
    <location>
        <begin position="51"/>
        <end position="61"/>
    </location>
</feature>
<protein>
    <recommendedName>
        <fullName>Protein PLANT CADMIUM RESISTANCE 10</fullName>
        <shortName>AtPCR10</shortName>
    </recommendedName>
</protein>
<comment type="function">
    <text evidence="2">May be involved in cadmium resistance.</text>
</comment>
<comment type="subcellular location">
    <subcellularLocation>
        <location evidence="4">Membrane</location>
        <topology evidence="4">Multi-pass membrane protein</topology>
    </subcellularLocation>
</comment>
<comment type="alternative products">
    <event type="alternative splicing"/>
    <isoform>
        <id>Q8S8T8-1</id>
        <name>1</name>
        <sequence type="displayed"/>
    </isoform>
    <isoform>
        <id>Q8S8T8-2</id>
        <name>2</name>
        <sequence type="described" ref="VSP_040962"/>
    </isoform>
    <isoform>
        <id>Q8S8T8-3</id>
        <name>3</name>
        <sequence type="described" ref="VSP_040960 VSP_040961"/>
    </isoform>
</comment>
<comment type="similarity">
    <text evidence="4">Belongs to the cornifelin family.</text>
</comment>
<accession>Q8S8T8</accession>
<accession>B3H5K6</accession>
<accession>Q0WRW9</accession>
<accession>Q3EBI6</accession>